<protein>
    <recommendedName>
        <fullName evidence="1">Arginine--tRNA ligase</fullName>
        <ecNumber evidence="1">6.1.1.19</ecNumber>
    </recommendedName>
    <alternativeName>
        <fullName evidence="1">Arginyl-tRNA synthetase</fullName>
        <shortName evidence="1">ArgRS</shortName>
    </alternativeName>
</protein>
<sequence>MSVACTIRRHIIEKLHVLNIDNFVVTNESILAKLIVDYPNNPDHGDLYTNAALILSKYIKKNPMDIAKILVDEFSSIKEISDINVVKPGFINFNISLDVWYEIIISINRLKEKFGHVNFGNGKRVNIEFVSANPTGPMHIGHARGAIFGDVLANLLERVGYEVVREYYINDAGAQIDVLVESVYLRYKEVLGENIVIGSGLYPGLYLKDIGKLLYQEYDSGLLGMDYSQRRRIIRDVSLMYLMKLIKEDLALLGIKHDIFTSESQLQKDNIVQKCVELLQEKQLIYYGTLDQPKGTEGINWKPRTQMLFKSTDFGDDVDRALQKADGSWTYFANDIAYHFYKISRGFQHMILELGSDHIGYVKRLKAAVKALSDGNATIDIKLHSIVNFLDNGAQVKMSKRSGEFLTIKDVIEKVGKDVVRFIMLTRKSDVVLDFDFAKVVEQSKNNPVFYVQYAHARVHSLIRNAPKILEIELVDFSVLSSKEEILLIKLLAKWQDIVEISAKTAEPHRITFYLIEIAEAFHALWGYGNKSTDMRFIVDNNINLTSARIYLAKSVGYVIASGLTIFSIVPLTEMK</sequence>
<dbReference type="EC" id="6.1.1.19" evidence="1"/>
<dbReference type="EMBL" id="CR767821">
    <property type="protein sequence ID" value="CAH58219.1"/>
    <property type="molecule type" value="Genomic_DNA"/>
</dbReference>
<dbReference type="EMBL" id="CR925678">
    <property type="protein sequence ID" value="CAI27007.1"/>
    <property type="molecule type" value="Genomic_DNA"/>
</dbReference>
<dbReference type="RefSeq" id="WP_011155172.1">
    <property type="nucleotide sequence ID" value="NC_005295.2"/>
</dbReference>
<dbReference type="SMR" id="Q5HB39"/>
<dbReference type="GeneID" id="33058025"/>
<dbReference type="KEGG" id="eru:Erum4910"/>
<dbReference type="KEGG" id="erw:ERWE_CDS_05130"/>
<dbReference type="eggNOG" id="COG0018">
    <property type="taxonomic scope" value="Bacteria"/>
</dbReference>
<dbReference type="HOGENOM" id="CLU_006406_0_1_5"/>
<dbReference type="Proteomes" id="UP000001021">
    <property type="component" value="Chromosome"/>
</dbReference>
<dbReference type="GO" id="GO:0005737">
    <property type="term" value="C:cytoplasm"/>
    <property type="evidence" value="ECO:0007669"/>
    <property type="project" value="UniProtKB-SubCell"/>
</dbReference>
<dbReference type="GO" id="GO:0004814">
    <property type="term" value="F:arginine-tRNA ligase activity"/>
    <property type="evidence" value="ECO:0007669"/>
    <property type="project" value="UniProtKB-UniRule"/>
</dbReference>
<dbReference type="GO" id="GO:0005524">
    <property type="term" value="F:ATP binding"/>
    <property type="evidence" value="ECO:0007669"/>
    <property type="project" value="UniProtKB-UniRule"/>
</dbReference>
<dbReference type="GO" id="GO:0006420">
    <property type="term" value="P:arginyl-tRNA aminoacylation"/>
    <property type="evidence" value="ECO:0007669"/>
    <property type="project" value="UniProtKB-UniRule"/>
</dbReference>
<dbReference type="CDD" id="cd00671">
    <property type="entry name" value="ArgRS_core"/>
    <property type="match status" value="1"/>
</dbReference>
<dbReference type="Gene3D" id="3.30.1360.70">
    <property type="entry name" value="Arginyl tRNA synthetase N-terminal domain"/>
    <property type="match status" value="1"/>
</dbReference>
<dbReference type="Gene3D" id="3.40.50.620">
    <property type="entry name" value="HUPs"/>
    <property type="match status" value="1"/>
</dbReference>
<dbReference type="Gene3D" id="1.10.730.10">
    <property type="entry name" value="Isoleucyl-tRNA Synthetase, Domain 1"/>
    <property type="match status" value="1"/>
</dbReference>
<dbReference type="HAMAP" id="MF_00123">
    <property type="entry name" value="Arg_tRNA_synth"/>
    <property type="match status" value="1"/>
</dbReference>
<dbReference type="InterPro" id="IPR001412">
    <property type="entry name" value="aa-tRNA-synth_I_CS"/>
</dbReference>
<dbReference type="InterPro" id="IPR001278">
    <property type="entry name" value="Arg-tRNA-ligase"/>
</dbReference>
<dbReference type="InterPro" id="IPR005148">
    <property type="entry name" value="Arg-tRNA-synth_N"/>
</dbReference>
<dbReference type="InterPro" id="IPR036695">
    <property type="entry name" value="Arg-tRNA-synth_N_sf"/>
</dbReference>
<dbReference type="InterPro" id="IPR035684">
    <property type="entry name" value="ArgRS_core"/>
</dbReference>
<dbReference type="InterPro" id="IPR008909">
    <property type="entry name" value="DALR_anticod-bd"/>
</dbReference>
<dbReference type="InterPro" id="IPR014729">
    <property type="entry name" value="Rossmann-like_a/b/a_fold"/>
</dbReference>
<dbReference type="InterPro" id="IPR009080">
    <property type="entry name" value="tRNAsynth_Ia_anticodon-bd"/>
</dbReference>
<dbReference type="NCBIfam" id="TIGR00456">
    <property type="entry name" value="argS"/>
    <property type="match status" value="1"/>
</dbReference>
<dbReference type="PANTHER" id="PTHR11956:SF5">
    <property type="entry name" value="ARGININE--TRNA LIGASE, CYTOPLASMIC"/>
    <property type="match status" value="1"/>
</dbReference>
<dbReference type="PANTHER" id="PTHR11956">
    <property type="entry name" value="ARGINYL-TRNA SYNTHETASE"/>
    <property type="match status" value="1"/>
</dbReference>
<dbReference type="Pfam" id="PF03485">
    <property type="entry name" value="Arg_tRNA_synt_N"/>
    <property type="match status" value="1"/>
</dbReference>
<dbReference type="Pfam" id="PF05746">
    <property type="entry name" value="DALR_1"/>
    <property type="match status" value="1"/>
</dbReference>
<dbReference type="Pfam" id="PF00750">
    <property type="entry name" value="tRNA-synt_1d"/>
    <property type="match status" value="1"/>
</dbReference>
<dbReference type="PRINTS" id="PR01038">
    <property type="entry name" value="TRNASYNTHARG"/>
</dbReference>
<dbReference type="SMART" id="SM01016">
    <property type="entry name" value="Arg_tRNA_synt_N"/>
    <property type="match status" value="1"/>
</dbReference>
<dbReference type="SMART" id="SM00836">
    <property type="entry name" value="DALR_1"/>
    <property type="match status" value="1"/>
</dbReference>
<dbReference type="SUPFAM" id="SSF47323">
    <property type="entry name" value="Anticodon-binding domain of a subclass of class I aminoacyl-tRNA synthetases"/>
    <property type="match status" value="1"/>
</dbReference>
<dbReference type="SUPFAM" id="SSF55190">
    <property type="entry name" value="Arginyl-tRNA synthetase (ArgRS), N-terminal 'additional' domain"/>
    <property type="match status" value="1"/>
</dbReference>
<dbReference type="SUPFAM" id="SSF52374">
    <property type="entry name" value="Nucleotidylyl transferase"/>
    <property type="match status" value="1"/>
</dbReference>
<dbReference type="PROSITE" id="PS00178">
    <property type="entry name" value="AA_TRNA_LIGASE_I"/>
    <property type="match status" value="1"/>
</dbReference>
<feature type="chain" id="PRO_0000242020" description="Arginine--tRNA ligase">
    <location>
        <begin position="1"/>
        <end position="576"/>
    </location>
</feature>
<feature type="short sequence motif" description="'HIGH' region">
    <location>
        <begin position="132"/>
        <end position="142"/>
    </location>
</feature>
<proteinExistence type="inferred from homology"/>
<name>SYR_EHRRW</name>
<evidence type="ECO:0000255" key="1">
    <source>
        <dbReference type="HAMAP-Rule" id="MF_00123"/>
    </source>
</evidence>
<keyword id="KW-0030">Aminoacyl-tRNA synthetase</keyword>
<keyword id="KW-0067">ATP-binding</keyword>
<keyword id="KW-0963">Cytoplasm</keyword>
<keyword id="KW-0436">Ligase</keyword>
<keyword id="KW-0547">Nucleotide-binding</keyword>
<keyword id="KW-0648">Protein biosynthesis</keyword>
<organism>
    <name type="scientific">Ehrlichia ruminantium (strain Welgevonden)</name>
    <dbReference type="NCBI Taxonomy" id="254945"/>
    <lineage>
        <taxon>Bacteria</taxon>
        <taxon>Pseudomonadati</taxon>
        <taxon>Pseudomonadota</taxon>
        <taxon>Alphaproteobacteria</taxon>
        <taxon>Rickettsiales</taxon>
        <taxon>Anaplasmataceae</taxon>
        <taxon>Ehrlichia</taxon>
    </lineage>
</organism>
<accession>Q5HB39</accession>
<accession>Q5FEH9</accession>
<reference key="1">
    <citation type="journal article" date="2005" name="Proc. Natl. Acad. Sci. U.S.A.">
        <title>The genome of the heartwater agent Ehrlichia ruminantium contains multiple tandem repeats of actively variable copy number.</title>
        <authorList>
            <person name="Collins N.E."/>
            <person name="Liebenberg J."/>
            <person name="de Villiers E.P."/>
            <person name="Brayton K.A."/>
            <person name="Louw E."/>
            <person name="Pretorius A."/>
            <person name="Faber F.E."/>
            <person name="van Heerden H."/>
            <person name="Josemans A."/>
            <person name="van Kleef M."/>
            <person name="Steyn H.C."/>
            <person name="van Strijp M.F."/>
            <person name="Zweygarth E."/>
            <person name="Jongejan F."/>
            <person name="Maillard J.C."/>
            <person name="Berthier D."/>
            <person name="Botha M."/>
            <person name="Joubert F."/>
            <person name="Corton C.H."/>
            <person name="Thomson N.R."/>
            <person name="Allsopp M.T."/>
            <person name="Allsopp B.A."/>
        </authorList>
    </citation>
    <scope>NUCLEOTIDE SEQUENCE [LARGE SCALE GENOMIC DNA]</scope>
    <source>
        <strain>Welgevonden</strain>
    </source>
</reference>
<reference key="2">
    <citation type="journal article" date="2006" name="J. Bacteriol.">
        <title>Comparative genomic analysis of three strains of Ehrlichia ruminantium reveals an active process of genome size plasticity.</title>
        <authorList>
            <person name="Frutos R."/>
            <person name="Viari A."/>
            <person name="Ferraz C."/>
            <person name="Morgat A."/>
            <person name="Eychenie S."/>
            <person name="Kandassamy Y."/>
            <person name="Chantal I."/>
            <person name="Bensaid A."/>
            <person name="Coissac E."/>
            <person name="Vachiery N."/>
            <person name="Demaille J."/>
            <person name="Martinez D."/>
        </authorList>
    </citation>
    <scope>NUCLEOTIDE SEQUENCE [LARGE SCALE GENOMIC DNA]</scope>
    <source>
        <strain>Welgevonden</strain>
    </source>
</reference>
<gene>
    <name evidence="1" type="primary">argS</name>
    <name type="ordered locus">Erum4910</name>
    <name type="ordered locus">ERWE_CDS_05130</name>
</gene>
<comment type="catalytic activity">
    <reaction evidence="1">
        <text>tRNA(Arg) + L-arginine + ATP = L-arginyl-tRNA(Arg) + AMP + diphosphate</text>
        <dbReference type="Rhea" id="RHEA:20301"/>
        <dbReference type="Rhea" id="RHEA-COMP:9658"/>
        <dbReference type="Rhea" id="RHEA-COMP:9673"/>
        <dbReference type="ChEBI" id="CHEBI:30616"/>
        <dbReference type="ChEBI" id="CHEBI:32682"/>
        <dbReference type="ChEBI" id="CHEBI:33019"/>
        <dbReference type="ChEBI" id="CHEBI:78442"/>
        <dbReference type="ChEBI" id="CHEBI:78513"/>
        <dbReference type="ChEBI" id="CHEBI:456215"/>
        <dbReference type="EC" id="6.1.1.19"/>
    </reaction>
</comment>
<comment type="subunit">
    <text evidence="1">Monomer.</text>
</comment>
<comment type="subcellular location">
    <subcellularLocation>
        <location evidence="1">Cytoplasm</location>
    </subcellularLocation>
</comment>
<comment type="similarity">
    <text evidence="1">Belongs to the class-I aminoacyl-tRNA synthetase family.</text>
</comment>